<sequence length="428" mass="48285">MTTRAASANLANARMMHNMEEAGHMANLKGRPHTSHASQRNTLGDIGNQVSAITISDVPRKDPIIKKEIVHLSSHQHKILTKSKATTSLKSLAEESHIPKKQEAFTFLEPVAAMPKPTTVPTATVLPQPTVPVPMDISENVPESFSRVLLNVQNIDANDKENPQLVSEYVNDIYDYMRDLEGKYPIRHNYLENQEITGKMRAILIDWLCQVHHRFHLLQETLYLTVAIIDRLLQESPVPRNKLQLVGVTSMLIASKYEEMYAPEVADFVYITDNAYTKKEILEMEQHILKKLNFSFGRPLCLHFLRRDSKAGQVDANKHTLAKYLMELTITEYDMVQYLPSKIAAAALCLSMKLLDSTHWTETLTHYSSYCEKDLVSTMQKLASLVIKAENSKLTAVHTKYSSSKFMKISKLAALKSPLVKELAAASV</sequence>
<organism>
    <name type="scientific">Spisula solidissima</name>
    <name type="common">Atlantic surf-clam</name>
    <dbReference type="NCBI Taxonomy" id="6584"/>
    <lineage>
        <taxon>Eukaryota</taxon>
        <taxon>Metazoa</taxon>
        <taxon>Spiralia</taxon>
        <taxon>Lophotrochozoa</taxon>
        <taxon>Mollusca</taxon>
        <taxon>Bivalvia</taxon>
        <taxon>Autobranchia</taxon>
        <taxon>Heteroconchia</taxon>
        <taxon>Euheterodonta</taxon>
        <taxon>Imparidentia</taxon>
        <taxon>Neoheterodontei</taxon>
        <taxon>Venerida</taxon>
        <taxon>Mactroidea</taxon>
        <taxon>Mactridae</taxon>
        <taxon>Spisula</taxon>
    </lineage>
</organism>
<protein>
    <recommendedName>
        <fullName>G2/mitotic-specific cyclin-B</fullName>
    </recommendedName>
</protein>
<evidence type="ECO:0000305" key="1"/>
<reference key="1">
    <citation type="journal article" date="1989" name="J. Cell Biol.">
        <title>The role of cyclin B in meiosis I.</title>
        <authorList>
            <person name="Westendorf J.M."/>
            <person name="Swenson K.I."/>
            <person name="Ruderman J.V."/>
        </authorList>
    </citation>
    <scope>NUCLEOTIDE SEQUENCE [MRNA]</scope>
</reference>
<name>CCNB_SPISO</name>
<proteinExistence type="evidence at transcript level"/>
<feature type="chain" id="PRO_0000080388" description="G2/mitotic-specific cyclin-B">
    <location>
        <begin position="1"/>
        <end position="428"/>
    </location>
</feature>
<keyword id="KW-0131">Cell cycle</keyword>
<keyword id="KW-0132">Cell division</keyword>
<keyword id="KW-0195">Cyclin</keyword>
<keyword id="KW-0498">Mitosis</keyword>
<accession>P13952</accession>
<dbReference type="EMBL" id="X15485">
    <property type="protein sequence ID" value="CAA33513.1"/>
    <property type="molecule type" value="mRNA"/>
</dbReference>
<dbReference type="PIR" id="A30108">
    <property type="entry name" value="A30108"/>
</dbReference>
<dbReference type="SMR" id="P13952"/>
<dbReference type="GO" id="GO:0016538">
    <property type="term" value="F:cyclin-dependent protein serine/threonine kinase regulator activity"/>
    <property type="evidence" value="ECO:0007669"/>
    <property type="project" value="InterPro"/>
</dbReference>
<dbReference type="GO" id="GO:0051301">
    <property type="term" value="P:cell division"/>
    <property type="evidence" value="ECO:0007669"/>
    <property type="project" value="UniProtKB-KW"/>
</dbReference>
<dbReference type="GO" id="GO:0044772">
    <property type="term" value="P:mitotic cell cycle phase transition"/>
    <property type="evidence" value="ECO:0007669"/>
    <property type="project" value="InterPro"/>
</dbReference>
<dbReference type="CDD" id="cd20507">
    <property type="entry name" value="CYCLIN_CCNB1-like_rpt1"/>
    <property type="match status" value="1"/>
</dbReference>
<dbReference type="CDD" id="cd20509">
    <property type="entry name" value="CYCLIN_CCNB1-like_rpt2"/>
    <property type="match status" value="1"/>
</dbReference>
<dbReference type="FunFam" id="1.10.472.10:FF:000001">
    <property type="entry name" value="G2/mitotic-specific cyclin"/>
    <property type="match status" value="1"/>
</dbReference>
<dbReference type="Gene3D" id="1.10.472.10">
    <property type="entry name" value="Cyclin-like"/>
    <property type="match status" value="2"/>
</dbReference>
<dbReference type="InterPro" id="IPR039361">
    <property type="entry name" value="Cyclin"/>
</dbReference>
<dbReference type="InterPro" id="IPR013763">
    <property type="entry name" value="Cyclin-like_dom"/>
</dbReference>
<dbReference type="InterPro" id="IPR036915">
    <property type="entry name" value="Cyclin-like_sf"/>
</dbReference>
<dbReference type="InterPro" id="IPR046965">
    <property type="entry name" value="Cyclin_A/B-like"/>
</dbReference>
<dbReference type="InterPro" id="IPR004367">
    <property type="entry name" value="Cyclin_C-dom"/>
</dbReference>
<dbReference type="InterPro" id="IPR006671">
    <property type="entry name" value="Cyclin_N"/>
</dbReference>
<dbReference type="InterPro" id="IPR048258">
    <property type="entry name" value="Cyclins_cyclin-box"/>
</dbReference>
<dbReference type="PANTHER" id="PTHR10177">
    <property type="entry name" value="CYCLINS"/>
    <property type="match status" value="1"/>
</dbReference>
<dbReference type="Pfam" id="PF02984">
    <property type="entry name" value="Cyclin_C"/>
    <property type="match status" value="1"/>
</dbReference>
<dbReference type="Pfam" id="PF00134">
    <property type="entry name" value="Cyclin_N"/>
    <property type="match status" value="1"/>
</dbReference>
<dbReference type="PIRSF" id="PIRSF001771">
    <property type="entry name" value="Cyclin_A_B_D_E"/>
    <property type="match status" value="1"/>
</dbReference>
<dbReference type="SMART" id="SM00385">
    <property type="entry name" value="CYCLIN"/>
    <property type="match status" value="2"/>
</dbReference>
<dbReference type="SMART" id="SM01332">
    <property type="entry name" value="Cyclin_C"/>
    <property type="match status" value="1"/>
</dbReference>
<dbReference type="SUPFAM" id="SSF47954">
    <property type="entry name" value="Cyclin-like"/>
    <property type="match status" value="2"/>
</dbReference>
<dbReference type="PROSITE" id="PS00292">
    <property type="entry name" value="CYCLINS"/>
    <property type="match status" value="1"/>
</dbReference>
<comment type="function">
    <text>Essential for the control of the cell cycle at the G2/M (mitosis) transition.</text>
</comment>
<comment type="subunit">
    <text>Interacts with the CDC2 protein kinase to form a serine/threonine kinase holoenzyme complex also known as maturation promoting factor (MPF). The cyclin subunit imparts substrate specificity to the complex.</text>
</comment>
<comment type="developmental stage">
    <text>Accumulates steadily during G2 and is abruptly destroyed at mitosis.</text>
</comment>
<comment type="similarity">
    <text evidence="1">Belongs to the cyclin family. Cyclin AB subfamily.</text>
</comment>